<organism>
    <name type="scientific">Escherichia coli O157:H7</name>
    <dbReference type="NCBI Taxonomy" id="83334"/>
    <lineage>
        <taxon>Bacteria</taxon>
        <taxon>Pseudomonadati</taxon>
        <taxon>Pseudomonadota</taxon>
        <taxon>Gammaproteobacteria</taxon>
        <taxon>Enterobacterales</taxon>
        <taxon>Enterobacteriaceae</taxon>
        <taxon>Escherichia</taxon>
    </lineage>
</organism>
<feature type="chain" id="PRO_0000198387" description="L-arabinose isomerase">
    <location>
        <begin position="1"/>
        <end position="500"/>
    </location>
</feature>
<feature type="binding site" evidence="1">
    <location>
        <position position="306"/>
    </location>
    <ligand>
        <name>Mn(2+)</name>
        <dbReference type="ChEBI" id="CHEBI:29035"/>
    </ligand>
</feature>
<feature type="binding site" evidence="1">
    <location>
        <position position="333"/>
    </location>
    <ligand>
        <name>Mn(2+)</name>
        <dbReference type="ChEBI" id="CHEBI:29035"/>
    </ligand>
</feature>
<feature type="binding site" evidence="1">
    <location>
        <position position="350"/>
    </location>
    <ligand>
        <name>Mn(2+)</name>
        <dbReference type="ChEBI" id="CHEBI:29035"/>
    </ligand>
</feature>
<feature type="binding site" evidence="1">
    <location>
        <position position="450"/>
    </location>
    <ligand>
        <name>Mn(2+)</name>
        <dbReference type="ChEBI" id="CHEBI:29035"/>
    </ligand>
</feature>
<sequence length="500" mass="56089">MTIFDNYEVWFVIGSQHLYGPETLRQVTQHAEHVVKALNTEAKLPCKLVLKPLGTTPDEITAICRDANYDDRCAGLVVWLHTFSPAKMWINGLTMLNKPLLQFHTQFNAALPWDSIDMDFMNLNQTAHGGREFGFIGARMRQQHAVVTGHWQDKQAHERIGSWMRQAVSKQDTRHLKVCRFGDNMREVAVTDGDKVAAQIKFGFSVNTWAVGDLVQVVNSISDGDVNALVDEYESCYTMTPATQIHGEKRQNVLEAARIELGMKRFLEQGGFHAFTTTFEDLHGLKQLPGLAVQRLMQQGYGFAGEGDWKTAALLRIMKVMSTGLQGGTSFMEDYTYHFEKGNDLVLGSHMLEVCPSIAAEEKPILDVQHLGIGGKDDPARLIFNTQTGPAIVASLIDLGDRYRLLVNCIDTVKTPHSLPKLPVANALWKAQPDLPTASEAWILAGGAHHTVFSHALNLNDMRQFAEMHDIEITVIDNDTRLPAFKDALRWNEVYYGFRR</sequence>
<accession>P58538</accession>
<gene>
    <name evidence="1" type="primary">araA</name>
    <name type="ordered locus">Z0070</name>
    <name type="ordered locus">ECs0066</name>
</gene>
<keyword id="KW-0054">Arabinose catabolism</keyword>
<keyword id="KW-0119">Carbohydrate metabolism</keyword>
<keyword id="KW-0413">Isomerase</keyword>
<keyword id="KW-0464">Manganese</keyword>
<keyword id="KW-0479">Metal-binding</keyword>
<keyword id="KW-1185">Reference proteome</keyword>
<dbReference type="EC" id="5.3.1.4" evidence="1"/>
<dbReference type="EMBL" id="AE005174">
    <property type="protein sequence ID" value="AAG54366.1"/>
    <property type="molecule type" value="Genomic_DNA"/>
</dbReference>
<dbReference type="EMBL" id="BA000007">
    <property type="protein sequence ID" value="BAB33489.1"/>
    <property type="molecule type" value="Genomic_DNA"/>
</dbReference>
<dbReference type="PIR" id="B85488">
    <property type="entry name" value="B85488"/>
</dbReference>
<dbReference type="PIR" id="B90637">
    <property type="entry name" value="B90637"/>
</dbReference>
<dbReference type="RefSeq" id="NP_308093.1">
    <property type="nucleotide sequence ID" value="NC_002695.1"/>
</dbReference>
<dbReference type="RefSeq" id="WP_000151715.1">
    <property type="nucleotide sequence ID" value="NZ_VOAI01000002.1"/>
</dbReference>
<dbReference type="SMR" id="P58538"/>
<dbReference type="STRING" id="155864.Z0070"/>
<dbReference type="GeneID" id="913468"/>
<dbReference type="KEGG" id="ece:Z0070"/>
<dbReference type="KEGG" id="ecs:ECs_0066"/>
<dbReference type="PATRIC" id="fig|386585.9.peg.166"/>
<dbReference type="eggNOG" id="COG2160">
    <property type="taxonomic scope" value="Bacteria"/>
</dbReference>
<dbReference type="HOGENOM" id="CLU_045663_0_0_6"/>
<dbReference type="OMA" id="LMEDYTY"/>
<dbReference type="BRENDA" id="5.3.1.4">
    <property type="organism ID" value="2026"/>
</dbReference>
<dbReference type="UniPathway" id="UPA00145">
    <property type="reaction ID" value="UER00565"/>
</dbReference>
<dbReference type="Proteomes" id="UP000000558">
    <property type="component" value="Chromosome"/>
</dbReference>
<dbReference type="Proteomes" id="UP000002519">
    <property type="component" value="Chromosome"/>
</dbReference>
<dbReference type="GO" id="GO:0005829">
    <property type="term" value="C:cytosol"/>
    <property type="evidence" value="ECO:0007669"/>
    <property type="project" value="TreeGrafter"/>
</dbReference>
<dbReference type="GO" id="GO:0008733">
    <property type="term" value="F:L-arabinose isomerase activity"/>
    <property type="evidence" value="ECO:0007669"/>
    <property type="project" value="UniProtKB-UniRule"/>
</dbReference>
<dbReference type="GO" id="GO:0030145">
    <property type="term" value="F:manganese ion binding"/>
    <property type="evidence" value="ECO:0007669"/>
    <property type="project" value="UniProtKB-UniRule"/>
</dbReference>
<dbReference type="GO" id="GO:0019569">
    <property type="term" value="P:L-arabinose catabolic process to xylulose 5-phosphate"/>
    <property type="evidence" value="ECO:0007669"/>
    <property type="project" value="UniProtKB-UniRule"/>
</dbReference>
<dbReference type="CDD" id="cd03557">
    <property type="entry name" value="L-arabinose_isomerase"/>
    <property type="match status" value="1"/>
</dbReference>
<dbReference type="FunFam" id="3.40.50.10940:FF:000001">
    <property type="entry name" value="L-arabinose isomerase"/>
    <property type="match status" value="1"/>
</dbReference>
<dbReference type="Gene3D" id="3.40.50.10940">
    <property type="match status" value="1"/>
</dbReference>
<dbReference type="HAMAP" id="MF_00519">
    <property type="entry name" value="Arabinose_Isome"/>
    <property type="match status" value="1"/>
</dbReference>
<dbReference type="InterPro" id="IPR024664">
    <property type="entry name" value="Ara_Isoase_C"/>
</dbReference>
<dbReference type="InterPro" id="IPR055390">
    <property type="entry name" value="AraA_central"/>
</dbReference>
<dbReference type="InterPro" id="IPR055389">
    <property type="entry name" value="AraA_N"/>
</dbReference>
<dbReference type="InterPro" id="IPR038583">
    <property type="entry name" value="AraA_N_sf"/>
</dbReference>
<dbReference type="InterPro" id="IPR004216">
    <property type="entry name" value="Fuc/Ara_isomerase_C"/>
</dbReference>
<dbReference type="InterPro" id="IPR009015">
    <property type="entry name" value="Fucose_isomerase_N/cen_sf"/>
</dbReference>
<dbReference type="InterPro" id="IPR003762">
    <property type="entry name" value="Lara_isomerase"/>
</dbReference>
<dbReference type="NCBIfam" id="NF002795">
    <property type="entry name" value="PRK02929.1"/>
    <property type="match status" value="1"/>
</dbReference>
<dbReference type="PANTHER" id="PTHR38464">
    <property type="entry name" value="L-ARABINOSE ISOMERASE"/>
    <property type="match status" value="1"/>
</dbReference>
<dbReference type="PANTHER" id="PTHR38464:SF1">
    <property type="entry name" value="L-ARABINOSE ISOMERASE"/>
    <property type="match status" value="1"/>
</dbReference>
<dbReference type="Pfam" id="PF24856">
    <property type="entry name" value="AraA_central"/>
    <property type="match status" value="1"/>
</dbReference>
<dbReference type="Pfam" id="PF02610">
    <property type="entry name" value="AraA_N"/>
    <property type="match status" value="1"/>
</dbReference>
<dbReference type="Pfam" id="PF11762">
    <property type="entry name" value="Arabinose_Iso_C"/>
    <property type="match status" value="1"/>
</dbReference>
<dbReference type="PIRSF" id="PIRSF001478">
    <property type="entry name" value="L-ara_isomerase"/>
    <property type="match status" value="1"/>
</dbReference>
<dbReference type="SUPFAM" id="SSF50443">
    <property type="entry name" value="FucI/AraA C-terminal domain-like"/>
    <property type="match status" value="1"/>
</dbReference>
<dbReference type="SUPFAM" id="SSF53743">
    <property type="entry name" value="FucI/AraA N-terminal and middle domains"/>
    <property type="match status" value="1"/>
</dbReference>
<comment type="function">
    <text evidence="1">Catalyzes the conversion of L-arabinose to L-ribulose.</text>
</comment>
<comment type="catalytic activity">
    <reaction evidence="1">
        <text>beta-L-arabinopyranose = L-ribulose</text>
        <dbReference type="Rhea" id="RHEA:14821"/>
        <dbReference type="ChEBI" id="CHEBI:16880"/>
        <dbReference type="ChEBI" id="CHEBI:40886"/>
        <dbReference type="EC" id="5.3.1.4"/>
    </reaction>
</comment>
<comment type="cofactor">
    <cofactor evidence="1">
        <name>Mn(2+)</name>
        <dbReference type="ChEBI" id="CHEBI:29035"/>
    </cofactor>
    <text evidence="1">Binds 1 Mn(2+) ion per subunit.</text>
</comment>
<comment type="pathway">
    <text evidence="1">Carbohydrate degradation; L-arabinose degradation via L-ribulose; D-xylulose 5-phosphate from L-arabinose (bacterial route): step 1/3.</text>
</comment>
<comment type="subunit">
    <text evidence="1">Homohexamer.</text>
</comment>
<comment type="similarity">
    <text evidence="1">Belongs to the arabinose isomerase family.</text>
</comment>
<protein>
    <recommendedName>
        <fullName evidence="1">L-arabinose isomerase</fullName>
        <ecNumber evidence="1">5.3.1.4</ecNumber>
    </recommendedName>
</protein>
<evidence type="ECO:0000255" key="1">
    <source>
        <dbReference type="HAMAP-Rule" id="MF_00519"/>
    </source>
</evidence>
<reference key="1">
    <citation type="journal article" date="2001" name="Nature">
        <title>Genome sequence of enterohaemorrhagic Escherichia coli O157:H7.</title>
        <authorList>
            <person name="Perna N.T."/>
            <person name="Plunkett G. III"/>
            <person name="Burland V."/>
            <person name="Mau B."/>
            <person name="Glasner J.D."/>
            <person name="Rose D.J."/>
            <person name="Mayhew G.F."/>
            <person name="Evans P.S."/>
            <person name="Gregor J."/>
            <person name="Kirkpatrick H.A."/>
            <person name="Posfai G."/>
            <person name="Hackett J."/>
            <person name="Klink S."/>
            <person name="Boutin A."/>
            <person name="Shao Y."/>
            <person name="Miller L."/>
            <person name="Grotbeck E.J."/>
            <person name="Davis N.W."/>
            <person name="Lim A."/>
            <person name="Dimalanta E.T."/>
            <person name="Potamousis K."/>
            <person name="Apodaca J."/>
            <person name="Anantharaman T.S."/>
            <person name="Lin J."/>
            <person name="Yen G."/>
            <person name="Schwartz D.C."/>
            <person name="Welch R.A."/>
            <person name="Blattner F.R."/>
        </authorList>
    </citation>
    <scope>NUCLEOTIDE SEQUENCE [LARGE SCALE GENOMIC DNA]</scope>
    <source>
        <strain>O157:H7 / EDL933 / ATCC 700927 / EHEC</strain>
    </source>
</reference>
<reference key="2">
    <citation type="journal article" date="2001" name="DNA Res.">
        <title>Complete genome sequence of enterohemorrhagic Escherichia coli O157:H7 and genomic comparison with a laboratory strain K-12.</title>
        <authorList>
            <person name="Hayashi T."/>
            <person name="Makino K."/>
            <person name="Ohnishi M."/>
            <person name="Kurokawa K."/>
            <person name="Ishii K."/>
            <person name="Yokoyama K."/>
            <person name="Han C.-G."/>
            <person name="Ohtsubo E."/>
            <person name="Nakayama K."/>
            <person name="Murata T."/>
            <person name="Tanaka M."/>
            <person name="Tobe T."/>
            <person name="Iida T."/>
            <person name="Takami H."/>
            <person name="Honda T."/>
            <person name="Sasakawa C."/>
            <person name="Ogasawara N."/>
            <person name="Yasunaga T."/>
            <person name="Kuhara S."/>
            <person name="Shiba T."/>
            <person name="Hattori M."/>
            <person name="Shinagawa H."/>
        </authorList>
    </citation>
    <scope>NUCLEOTIDE SEQUENCE [LARGE SCALE GENOMIC DNA]</scope>
    <source>
        <strain>O157:H7 / Sakai / RIMD 0509952 / EHEC</strain>
    </source>
</reference>
<proteinExistence type="inferred from homology"/>
<name>ARAA_ECO57</name>